<comment type="function">
    <text evidence="1 6 7 8 9 10 11">Component of the UFM1 ribosome E3 ligase (UREL) complex, a multiprotein complex that catalyzes ufmylation of endoplasmic reticulum-docked proteins (PubMed:30701081, PubMed:37795761). The UREL complex plays a key role in ribosome recycling by mediating mono-ufmylation of the RPL26/uL24 subunit of the 60S ribosome following ribosome dissociation: ufmylation weakens the junction between post-termination 60S subunits and SEC61 translocons, promoting release and recycling of the large ribosomal subunit from the endoplasmic reticulum membrane (By similarity). Ufmylation of RPL26/uL24 and subsequent 60S ribosome recycling either take place after normal termination of translation or after ribosome stalling during cotranslational translocation at the endoplasmic reticulum (By similarity). Within the UREL complex, DDRGK1 tethers the complex to the endoplasmic reticulum membrane to restrict its activity to endoplasmic reticulum-docked ribosomes and acts as an ufmylation 'reader': following RPL26/uL24 ufmylation, DDRGK1 specifically binds to ufmylated RPL26/uL24 via its UFIM motif, resulting in stable association between the 60S ribosome and the UREL complex, followed by dissociation of the 60S ribosome subunit from the endoplasmic reticulum membrane (By similarity). The UREL complex is also involved in reticulophagy in response to endoplasmic reticulum stress by promoting ufmylation of proteins such as CYB5R3 and RPN1, thereby promoting lysosomal degradation of ufmylated proteins (By similarity). Ufmylation-dependent reticulophagy inhibits the unfolded protein response (UPR) by regulating ERN1/IRE1-alpha stability (PubMed:28128204). Acts as a regulator of immunity by promoting differentiation of B-cells into plasma cells: acts by promoting expansion of the endoplasmic reticulum and regulating the unfolded protein response (UPR) (PubMed:30842412). May also be required for TRIP4 ufmylation (By similarity). May play a role in NF-kappa-B-mediated transcription through regulation of the phosphorylation and the degradation of NFKBIA, the inhibitor of NF-kappa-B (PubMed:28263186). Plays a role in cartilage development through SOX9, inhibiting the ubiquitin-mediated proteasomal degradation of this transcriptional regulator (PubMed:28263186). Required for stabilization and ufmylation of ATG9A (PubMed:37086384).</text>
</comment>
<comment type="subunit">
    <text evidence="1">Component of the UFM1 ribosome E3 ligase (UREL) complex, composed of UFL1, DDRGK1 and CDK5RAP3 (By similarity). Interacts with (unphosphorylated) ERN1/IRE1-alpha; interaction is dependent on UFM1 and takes place in response to endoplasmic reticulum stress, regulating ERN1/IRE1-alpha stability (By similarity). Interacts with NFKBIA (By similarity). Interacts with SOX9 (By similarity).</text>
</comment>
<comment type="subcellular location">
    <subcellularLocation>
        <location evidence="11">Endoplasmic reticulum membrane</location>
        <topology evidence="1">Single-pass membrane protein</topology>
    </subcellularLocation>
</comment>
<comment type="tissue specificity">
    <text evidence="3 4 8">Ubiquitously expressed (PubMed:20228063). Higher expression in pancreatic islets, pancreatic acini and testis (at protein level) (PubMed:21494687). Highly expressed in the intestinal exocrine cells (PubMed:30701081).</text>
</comment>
<comment type="domain">
    <text evidence="1">The UFM1-interacting motif (UFIM) specifically recognizes and binds ufmylated RPL26/uL24, resulting in stable association between the 60S ribosome and the UREL complex.</text>
</comment>
<comment type="PTM">
    <text evidence="1 4">Ufmylated; conjugated to ubiquitin-like protein UFM1, probably at Lys-268 by UFL1 (PubMed:21494687). The relevance of ufmylation is however unclear: as DDRGK1 acts as a substrate adapter for ufmylation, it is uncertain whether ufmylation is a collateral effect of the ufmylation process or whether it is required to regulate its activity (By similarity).</text>
</comment>
<comment type="PTM">
    <text evidence="1">Ubiquitinated. Ubiquitination probably triggers proteasomal degradation and is negatively regulated by UFL1, the enzyme involved in the ufmylation of DDRGK1.</text>
</comment>
<comment type="disruption phenotype">
    <text evidence="5 7 8">Embryonic lethality between 11.5 and 12.5 dpc due to defective erythroid development (PubMed:26544067, PubMed:28263186). Conditional deletion on adults leads to impaired adult hematopoiesis, resulting in pancytopenia and death: defects are due to elevated endoplasmic reticulum stress and activation of the unfolded protein response (UPR), leading to cell death of hematopoietic stem cells (PubMed:26544067). Chondrogenic mesenchymal condensation is absent in 12.5 dpc embryos (PubMed:28263186). Conditional deletion in intestinal epithelial cells causes a significant loss of both Paneth and goblet cells in intestine, which in turn results in dysbiotic microbiota and increased susceptibility to experimentally induced colitis (PubMed:30701081).</text>
</comment>
<comment type="similarity">
    <text evidence="14">Belongs to the DDRGK1 family.</text>
</comment>
<comment type="sequence caution" evidence="14">
    <conflict type="erroneous initiation">
        <sequence resource="EMBL-CDS" id="AAH51541"/>
    </conflict>
</comment>
<sequence length="315" mass="35977">MVGPWVYLVAAVLLIGLILFLTRSRGRAAAADGEPLHNEEERAGAGQVGRSLPQESEEQRTGSRPRRRRDLGSRLQAQRRAQRVAWEDGDENVGQTVIPAQEEEGIEKPAEVHPTGKIGAKKLRKLEEKQARKAQREAEEAEREERKRLESQREAEWKKEEERLRLKEEQKEEEERKAQEEQARREHEEYLKLKEAFVVEEEGVSETMTEEQSHSFLTEFINYIKKSKVVLLEDLAFQMGLRTQDAINRIQDLLTEGTLTGVIDDRGKFIYITPEELAAVANFIRQRGRVSITELAQASNSLISWGQDLPAQASA</sequence>
<reference key="1">
    <citation type="journal article" date="2009" name="PLoS Biol.">
        <title>Lineage-specific biology revealed by a finished genome assembly of the mouse.</title>
        <authorList>
            <person name="Church D.M."/>
            <person name="Goodstadt L."/>
            <person name="Hillier L.W."/>
            <person name="Zody M.C."/>
            <person name="Goldstein S."/>
            <person name="She X."/>
            <person name="Bult C.J."/>
            <person name="Agarwala R."/>
            <person name="Cherry J.L."/>
            <person name="DiCuccio M."/>
            <person name="Hlavina W."/>
            <person name="Kapustin Y."/>
            <person name="Meric P."/>
            <person name="Maglott D."/>
            <person name="Birtle Z."/>
            <person name="Marques A.C."/>
            <person name="Graves T."/>
            <person name="Zhou S."/>
            <person name="Teague B."/>
            <person name="Potamousis K."/>
            <person name="Churas C."/>
            <person name="Place M."/>
            <person name="Herschleb J."/>
            <person name="Runnheim R."/>
            <person name="Forrest D."/>
            <person name="Amos-Landgraf J."/>
            <person name="Schwartz D.C."/>
            <person name="Cheng Z."/>
            <person name="Lindblad-Toh K."/>
            <person name="Eichler E.E."/>
            <person name="Ponting C.P."/>
        </authorList>
    </citation>
    <scope>NUCLEOTIDE SEQUENCE [LARGE SCALE GENOMIC DNA]</scope>
    <source>
        <strain>C57BL/6J</strain>
    </source>
</reference>
<reference key="2">
    <citation type="submission" date="2005-07" db="EMBL/GenBank/DDBJ databases">
        <authorList>
            <person name="Mural R.J."/>
            <person name="Adams M.D."/>
            <person name="Myers E.W."/>
            <person name="Smith H.O."/>
            <person name="Venter J.C."/>
        </authorList>
    </citation>
    <scope>NUCLEOTIDE SEQUENCE [LARGE SCALE GENOMIC DNA]</scope>
</reference>
<reference key="3">
    <citation type="journal article" date="2004" name="Genome Res.">
        <title>The status, quality, and expansion of the NIH full-length cDNA project: the Mammalian Gene Collection (MGC).</title>
        <authorList>
            <consortium name="The MGC Project Team"/>
        </authorList>
    </citation>
    <scope>NUCLEOTIDE SEQUENCE [LARGE SCALE MRNA]</scope>
    <source>
        <strain>Czech II</strain>
        <tissue>Lung</tissue>
    </source>
</reference>
<reference key="4">
    <citation type="journal article" date="2005" name="Science">
        <title>The transcriptional landscape of the mammalian genome.</title>
        <authorList>
            <person name="Carninci P."/>
            <person name="Kasukawa T."/>
            <person name="Katayama S."/>
            <person name="Gough J."/>
            <person name="Frith M.C."/>
            <person name="Maeda N."/>
            <person name="Oyama R."/>
            <person name="Ravasi T."/>
            <person name="Lenhard B."/>
            <person name="Wells C."/>
            <person name="Kodzius R."/>
            <person name="Shimokawa K."/>
            <person name="Bajic V.B."/>
            <person name="Brenner S.E."/>
            <person name="Batalov S."/>
            <person name="Forrest A.R."/>
            <person name="Zavolan M."/>
            <person name="Davis M.J."/>
            <person name="Wilming L.G."/>
            <person name="Aidinis V."/>
            <person name="Allen J.E."/>
            <person name="Ambesi-Impiombato A."/>
            <person name="Apweiler R."/>
            <person name="Aturaliya R.N."/>
            <person name="Bailey T.L."/>
            <person name="Bansal M."/>
            <person name="Baxter L."/>
            <person name="Beisel K.W."/>
            <person name="Bersano T."/>
            <person name="Bono H."/>
            <person name="Chalk A.M."/>
            <person name="Chiu K.P."/>
            <person name="Choudhary V."/>
            <person name="Christoffels A."/>
            <person name="Clutterbuck D.R."/>
            <person name="Crowe M.L."/>
            <person name="Dalla E."/>
            <person name="Dalrymple B.P."/>
            <person name="de Bono B."/>
            <person name="Della Gatta G."/>
            <person name="di Bernardo D."/>
            <person name="Down T."/>
            <person name="Engstrom P."/>
            <person name="Fagiolini M."/>
            <person name="Faulkner G."/>
            <person name="Fletcher C.F."/>
            <person name="Fukushima T."/>
            <person name="Furuno M."/>
            <person name="Futaki S."/>
            <person name="Gariboldi M."/>
            <person name="Georgii-Hemming P."/>
            <person name="Gingeras T.R."/>
            <person name="Gojobori T."/>
            <person name="Green R.E."/>
            <person name="Gustincich S."/>
            <person name="Harbers M."/>
            <person name="Hayashi Y."/>
            <person name="Hensch T.K."/>
            <person name="Hirokawa N."/>
            <person name="Hill D."/>
            <person name="Huminiecki L."/>
            <person name="Iacono M."/>
            <person name="Ikeo K."/>
            <person name="Iwama A."/>
            <person name="Ishikawa T."/>
            <person name="Jakt M."/>
            <person name="Kanapin A."/>
            <person name="Katoh M."/>
            <person name="Kawasawa Y."/>
            <person name="Kelso J."/>
            <person name="Kitamura H."/>
            <person name="Kitano H."/>
            <person name="Kollias G."/>
            <person name="Krishnan S.P."/>
            <person name="Kruger A."/>
            <person name="Kummerfeld S.K."/>
            <person name="Kurochkin I.V."/>
            <person name="Lareau L.F."/>
            <person name="Lazarevic D."/>
            <person name="Lipovich L."/>
            <person name="Liu J."/>
            <person name="Liuni S."/>
            <person name="McWilliam S."/>
            <person name="Madan Babu M."/>
            <person name="Madera M."/>
            <person name="Marchionni L."/>
            <person name="Matsuda H."/>
            <person name="Matsuzawa S."/>
            <person name="Miki H."/>
            <person name="Mignone F."/>
            <person name="Miyake S."/>
            <person name="Morris K."/>
            <person name="Mottagui-Tabar S."/>
            <person name="Mulder N."/>
            <person name="Nakano N."/>
            <person name="Nakauchi H."/>
            <person name="Ng P."/>
            <person name="Nilsson R."/>
            <person name="Nishiguchi S."/>
            <person name="Nishikawa S."/>
            <person name="Nori F."/>
            <person name="Ohara O."/>
            <person name="Okazaki Y."/>
            <person name="Orlando V."/>
            <person name="Pang K.C."/>
            <person name="Pavan W.J."/>
            <person name="Pavesi G."/>
            <person name="Pesole G."/>
            <person name="Petrovsky N."/>
            <person name="Piazza S."/>
            <person name="Reed J."/>
            <person name="Reid J.F."/>
            <person name="Ring B.Z."/>
            <person name="Ringwald M."/>
            <person name="Rost B."/>
            <person name="Ruan Y."/>
            <person name="Salzberg S.L."/>
            <person name="Sandelin A."/>
            <person name="Schneider C."/>
            <person name="Schoenbach C."/>
            <person name="Sekiguchi K."/>
            <person name="Semple C.A."/>
            <person name="Seno S."/>
            <person name="Sessa L."/>
            <person name="Sheng Y."/>
            <person name="Shibata Y."/>
            <person name="Shimada H."/>
            <person name="Shimada K."/>
            <person name="Silva D."/>
            <person name="Sinclair B."/>
            <person name="Sperling S."/>
            <person name="Stupka E."/>
            <person name="Sugiura K."/>
            <person name="Sultana R."/>
            <person name="Takenaka Y."/>
            <person name="Taki K."/>
            <person name="Tammoja K."/>
            <person name="Tan S.L."/>
            <person name="Tang S."/>
            <person name="Taylor M.S."/>
            <person name="Tegner J."/>
            <person name="Teichmann S.A."/>
            <person name="Ueda H.R."/>
            <person name="van Nimwegen E."/>
            <person name="Verardo R."/>
            <person name="Wei C.L."/>
            <person name="Yagi K."/>
            <person name="Yamanishi H."/>
            <person name="Zabarovsky E."/>
            <person name="Zhu S."/>
            <person name="Zimmer A."/>
            <person name="Hide W."/>
            <person name="Bult C."/>
            <person name="Grimmond S.M."/>
            <person name="Teasdale R.D."/>
            <person name="Liu E.T."/>
            <person name="Brusic V."/>
            <person name="Quackenbush J."/>
            <person name="Wahlestedt C."/>
            <person name="Mattick J.S."/>
            <person name="Hume D.A."/>
            <person name="Kai C."/>
            <person name="Sasaki D."/>
            <person name="Tomaru Y."/>
            <person name="Fukuda S."/>
            <person name="Kanamori-Katayama M."/>
            <person name="Suzuki M."/>
            <person name="Aoki J."/>
            <person name="Arakawa T."/>
            <person name="Iida J."/>
            <person name="Imamura K."/>
            <person name="Itoh M."/>
            <person name="Kato T."/>
            <person name="Kawaji H."/>
            <person name="Kawagashira N."/>
            <person name="Kawashima T."/>
            <person name="Kojima M."/>
            <person name="Kondo S."/>
            <person name="Konno H."/>
            <person name="Nakano K."/>
            <person name="Ninomiya N."/>
            <person name="Nishio T."/>
            <person name="Okada M."/>
            <person name="Plessy C."/>
            <person name="Shibata K."/>
            <person name="Shiraki T."/>
            <person name="Suzuki S."/>
            <person name="Tagami M."/>
            <person name="Waki K."/>
            <person name="Watahiki A."/>
            <person name="Okamura-Oho Y."/>
            <person name="Suzuki H."/>
            <person name="Kawai J."/>
            <person name="Hayashizaki Y."/>
        </authorList>
    </citation>
    <scope>NUCLEOTIDE SEQUENCE [LARGE SCALE MRNA] OF 1-171</scope>
    <source>
        <strain>C57BL/6J</strain>
        <tissue>Embryo</tissue>
    </source>
</reference>
<reference key="5">
    <citation type="journal article" date="2010" name="Cell">
        <title>A tissue-specific atlas of mouse protein phosphorylation and expression.</title>
        <authorList>
            <person name="Huttlin E.L."/>
            <person name="Jedrychowski M.P."/>
            <person name="Elias J.E."/>
            <person name="Goswami T."/>
            <person name="Rad R."/>
            <person name="Beausoleil S.A."/>
            <person name="Villen J."/>
            <person name="Haas W."/>
            <person name="Sowa M.E."/>
            <person name="Gygi S.P."/>
        </authorList>
    </citation>
    <scope>IDENTIFICATION BY MASS SPECTROMETRY [LARGE SCALE ANALYSIS]</scope>
    <source>
        <tissue>Brain</tissue>
        <tissue>Kidney</tissue>
        <tissue>Liver</tissue>
        <tissue>Lung</tissue>
        <tissue>Pancreas</tissue>
        <tissue>Spleen</tissue>
        <tissue>Testis</tissue>
    </source>
</reference>
<reference key="6">
    <citation type="journal article" date="2010" name="J. Biol. Chem.">
        <title>A novel C53/LZAP-interacting protein regulates stability of C53/LZAP and DDRGK domain-containing Protein 1 (DDRGK1) and modulates NF-kappaB signaling.</title>
        <authorList>
            <person name="Wu J."/>
            <person name="Lei G."/>
            <person name="Mei M."/>
            <person name="Tang Y."/>
            <person name="Li H."/>
        </authorList>
    </citation>
    <scope>TISSUE SPECIFICITY</scope>
</reference>
<reference key="7">
    <citation type="journal article" date="2011" name="PLoS ONE">
        <title>Ubiquitin fold modifier 1 (UFM1) and its target UFBP1 protect pancreatic beta cells from ER stress-induced apoptosis.</title>
        <authorList>
            <person name="Lemaire K."/>
            <person name="Moura R.F."/>
            <person name="Granvik M."/>
            <person name="Igoillo-Esteve M."/>
            <person name="Hohmeier H.E."/>
            <person name="Hendrickx N."/>
            <person name="Newgard C.B."/>
            <person name="Waelkens E."/>
            <person name="Cnop M."/>
            <person name="Schuit F."/>
        </authorList>
    </citation>
    <scope>UFMYLATION</scope>
    <scope>SUBCELLULAR LOCATION</scope>
    <scope>TISSUE SPECIFICITY</scope>
</reference>
<reference key="8">
    <citation type="journal article" date="2015" name="PLoS Genet.">
        <title>UFBP1, a key component of the Ufm1 conjugation system, is essential for ufmylation-mediated regulation of erythroid development.</title>
        <authorList>
            <person name="Cai Y."/>
            <person name="Pi W."/>
            <person name="Sivaprakasam S."/>
            <person name="Zhu X."/>
            <person name="Zhang M."/>
            <person name="Chen J."/>
            <person name="Makala L."/>
            <person name="Lu C."/>
            <person name="Wu J."/>
            <person name="Teng Y."/>
            <person name="Pace B."/>
            <person name="Tuan D."/>
            <person name="Singh N."/>
            <person name="Li H."/>
        </authorList>
    </citation>
    <scope>DISRUPTION PHENOTYPE</scope>
</reference>
<reference key="9">
    <citation type="journal article" date="2017" name="J. Clin. Invest.">
        <title>Loss of DDRGK1 modulates SOX9 ubiquitination in spondyloepimetaphyseal dysplasia.</title>
        <authorList>
            <person name="Egunsola A.T."/>
            <person name="Bae Y."/>
            <person name="Jiang M.M."/>
            <person name="Liu D.S."/>
            <person name="Chen-Evenson Y."/>
            <person name="Bertin T."/>
            <person name="Chen S."/>
            <person name="Lu J.T."/>
            <person name="Nevarez L."/>
            <person name="Magal N."/>
            <person name="Raas-Rothschild A."/>
            <person name="Swindell E.C."/>
            <person name="Cohn D.H."/>
            <person name="Gibbs R.A."/>
            <person name="Campeau P.M."/>
            <person name="Shohat M."/>
            <person name="Lee B.H."/>
        </authorList>
    </citation>
    <scope>FUNCTION</scope>
    <scope>DISRUPTION PHENOTYPE</scope>
</reference>
<reference key="10">
    <citation type="journal article" date="2017" name="Nat. Commun.">
        <title>A critical role of DDRGK1 in endoplasmic reticulum homoeostasis via regulation of IRE1alpha stability.</title>
        <authorList>
            <person name="Liu J."/>
            <person name="Wang Y."/>
            <person name="Song L."/>
            <person name="Zeng L."/>
            <person name="Yi W."/>
            <person name="Liu T."/>
            <person name="Chen H."/>
            <person name="Wang M."/>
            <person name="Ju Z."/>
            <person name="Cong Y.S."/>
        </authorList>
    </citation>
    <scope>FUNCTION</scope>
</reference>
<reference key="11">
    <citation type="journal article" date="2019" name="Cell Discov.">
        <title>Indispensable role of the ubiquitin-fold modifier 1-specific E3 ligase in maintaining intestinal homeostasis and controlling gut inflammation.</title>
        <authorList>
            <person name="Cai Y."/>
            <person name="Zhu G."/>
            <person name="Liu S."/>
            <person name="Pan Z."/>
            <person name="Quintero M."/>
            <person name="Poole C.J."/>
            <person name="Lu C."/>
            <person name="Zhu H."/>
            <person name="Islam B."/>
            <person name="Riggelen J.V."/>
            <person name="Browning D."/>
            <person name="Liu K."/>
            <person name="Blumberg R."/>
            <person name="Singh N."/>
            <person name="Li H."/>
        </authorList>
    </citation>
    <scope>FUNCTION</scope>
    <scope>TISSUE SPECIFICITY</scope>
    <scope>DISRUPTION PHENOTYPE</scope>
</reference>
<reference key="12">
    <citation type="journal article" date="2019" name="Nat. Commun.">
        <title>Ufbp1 promotes plasma cell development and ER expansion by modulating distinct branches of UPR.</title>
        <authorList>
            <person name="Zhu H."/>
            <person name="Bhatt B."/>
            <person name="Sivaprakasam S."/>
            <person name="Cai Y."/>
            <person name="Liu S."/>
            <person name="Kodeboyina S.K."/>
            <person name="Patel N."/>
            <person name="Savage N.M."/>
            <person name="Sharma A."/>
            <person name="Kaufman R.J."/>
            <person name="Li H."/>
            <person name="Singh N."/>
        </authorList>
    </citation>
    <scope>FUNCTION</scope>
</reference>
<reference key="13">
    <citation type="journal article" date="2023" name="Cell. Mol. Life Sci.">
        <title>A neuroprotective role of Ufmylation through Atg9 in the aging brain of Drosophila.</title>
        <authorList>
            <person name="Li H."/>
            <person name="Yu Z."/>
            <person name="Niu Z."/>
            <person name="Cheng Y."/>
            <person name="Wei Z."/>
            <person name="Cai Y."/>
            <person name="Ma F."/>
            <person name="Hu L."/>
            <person name="Zhu J."/>
            <person name="Zhang W."/>
        </authorList>
    </citation>
    <scope>FUNCTION</scope>
</reference>
<reference key="14">
    <citation type="journal article" date="2023" name="FASEB J.">
        <title>UFMylation of HRD1 regulates endoplasmic reticulum homeostasis.</title>
        <authorList>
            <person name="Luo H."/>
            <person name="Jiao Q.B."/>
            <person name="Shen C.B."/>
            <person name="Gong W.Y."/>
            <person name="Yuan J.H."/>
            <person name="Liu Y.Y."/>
            <person name="Chen Z."/>
            <person name="Liu J."/>
            <person name="Xu X.L."/>
            <person name="Cong Y.S."/>
            <person name="Zhang X.W."/>
        </authorList>
    </citation>
    <scope>FUNCTION</scope>
    <scope>SUBCELLULAR LOCATION</scope>
</reference>
<reference key="15">
    <citation type="submission" date="2004-11" db="PDB data bank">
        <title>Solution structure of the PCI domain from mouse hypothetical protein AAH51541.</title>
        <authorList>
            <consortium name="RIKEN structural genomics initiative (RSGI)"/>
        </authorList>
    </citation>
    <scope>STRUCTURE BY NMR OF 216-274</scope>
</reference>
<gene>
    <name evidence="13 15" type="primary">Ddrgk1</name>
    <name evidence="12" type="synonym">Ufbp1</name>
</gene>
<protein>
    <recommendedName>
        <fullName evidence="14">DDRGK domain-containing protein 1</fullName>
    </recommendedName>
    <alternativeName>
        <fullName evidence="12">UFM1-binding and PCI domain-containing protein 1</fullName>
    </alternativeName>
</protein>
<evidence type="ECO:0000250" key="1">
    <source>
        <dbReference type="UniProtKB" id="Q96HY6"/>
    </source>
</evidence>
<evidence type="ECO:0000256" key="2">
    <source>
        <dbReference type="SAM" id="MobiDB-lite"/>
    </source>
</evidence>
<evidence type="ECO:0000269" key="3">
    <source>
    </source>
</evidence>
<evidence type="ECO:0000269" key="4">
    <source>
    </source>
</evidence>
<evidence type="ECO:0000269" key="5">
    <source>
    </source>
</evidence>
<evidence type="ECO:0000269" key="6">
    <source>
    </source>
</evidence>
<evidence type="ECO:0000269" key="7">
    <source>
    </source>
</evidence>
<evidence type="ECO:0000269" key="8">
    <source>
    </source>
</evidence>
<evidence type="ECO:0000269" key="9">
    <source>
    </source>
</evidence>
<evidence type="ECO:0000269" key="10">
    <source>
    </source>
</evidence>
<evidence type="ECO:0000269" key="11">
    <source>
    </source>
</evidence>
<evidence type="ECO:0000303" key="12">
    <source>
    </source>
</evidence>
<evidence type="ECO:0000303" key="13">
    <source>
    </source>
</evidence>
<evidence type="ECO:0000305" key="14"/>
<evidence type="ECO:0000312" key="15">
    <source>
        <dbReference type="MGI" id="MGI:1924256"/>
    </source>
</evidence>
<evidence type="ECO:0007829" key="16">
    <source>
        <dbReference type="PDB" id="1WI9"/>
    </source>
</evidence>
<proteinExistence type="evidence at protein level"/>
<dbReference type="EMBL" id="AL731707">
    <property type="status" value="NOT_ANNOTATED_CDS"/>
    <property type="molecule type" value="Genomic_DNA"/>
</dbReference>
<dbReference type="EMBL" id="AL772162">
    <property type="status" value="NOT_ANNOTATED_CDS"/>
    <property type="molecule type" value="Genomic_DNA"/>
</dbReference>
<dbReference type="EMBL" id="CH466519">
    <property type="protein sequence ID" value="EDL28284.1"/>
    <property type="molecule type" value="Genomic_DNA"/>
</dbReference>
<dbReference type="EMBL" id="BC115616">
    <property type="protein sequence ID" value="AAI15617.1"/>
    <property type="molecule type" value="mRNA"/>
</dbReference>
<dbReference type="EMBL" id="BC115617">
    <property type="protein sequence ID" value="AAI15618.1"/>
    <property type="molecule type" value="mRNA"/>
</dbReference>
<dbReference type="EMBL" id="BC051541">
    <property type="protein sequence ID" value="AAH51541.1"/>
    <property type="status" value="ALT_INIT"/>
    <property type="molecule type" value="mRNA"/>
</dbReference>
<dbReference type="EMBL" id="AK011170">
    <property type="protein sequence ID" value="BAB27444.1"/>
    <property type="molecule type" value="mRNA"/>
</dbReference>
<dbReference type="CCDS" id="CCDS38243.1"/>
<dbReference type="RefSeq" id="NP_084108.1">
    <property type="nucleotide sequence ID" value="NM_029832.3"/>
</dbReference>
<dbReference type="PDB" id="1WI9">
    <property type="method" value="NMR"/>
    <property type="chains" value="A=216-274"/>
</dbReference>
<dbReference type="PDBsum" id="1WI9"/>
<dbReference type="SMR" id="Q80WW9"/>
<dbReference type="BioGRID" id="218455">
    <property type="interactions" value="3"/>
</dbReference>
<dbReference type="FunCoup" id="Q80WW9">
    <property type="interactions" value="983"/>
</dbReference>
<dbReference type="STRING" id="10090.ENSMUSP00000086988"/>
<dbReference type="iPTMnet" id="Q80WW9"/>
<dbReference type="PhosphoSitePlus" id="Q80WW9"/>
<dbReference type="jPOST" id="Q80WW9"/>
<dbReference type="PaxDb" id="10090-ENSMUSP00000086988"/>
<dbReference type="PeptideAtlas" id="Q80WW9"/>
<dbReference type="ProteomicsDB" id="279847"/>
<dbReference type="Pumba" id="Q80WW9"/>
<dbReference type="Antibodypedia" id="2721">
    <property type="antibodies" value="73 antibodies from 18 providers"/>
</dbReference>
<dbReference type="Ensembl" id="ENSMUST00000089559.11">
    <property type="protein sequence ID" value="ENSMUSP00000086988.5"/>
    <property type="gene ID" value="ENSMUSG00000068290.12"/>
</dbReference>
<dbReference type="GeneID" id="77006"/>
<dbReference type="KEGG" id="mmu:77006"/>
<dbReference type="UCSC" id="uc008mjs.1">
    <property type="organism name" value="mouse"/>
</dbReference>
<dbReference type="AGR" id="MGI:1924256"/>
<dbReference type="CTD" id="65992"/>
<dbReference type="MGI" id="MGI:1924256">
    <property type="gene designation" value="Ddrgk1"/>
</dbReference>
<dbReference type="VEuPathDB" id="HostDB:ENSMUSG00000068290"/>
<dbReference type="eggNOG" id="KOG3054">
    <property type="taxonomic scope" value="Eukaryota"/>
</dbReference>
<dbReference type="GeneTree" id="ENSGT00390000017193"/>
<dbReference type="HOGENOM" id="CLU_059562_0_0_1"/>
<dbReference type="InParanoid" id="Q80WW9"/>
<dbReference type="OMA" id="EFTRECN"/>
<dbReference type="OrthoDB" id="2285710at2759"/>
<dbReference type="PhylomeDB" id="Q80WW9"/>
<dbReference type="TreeFam" id="TF314645"/>
<dbReference type="Reactome" id="R-MMU-8980692">
    <property type="pathway name" value="RHOA GTPase cycle"/>
</dbReference>
<dbReference type="BioGRID-ORCS" id="77006">
    <property type="hits" value="4 hits in 78 CRISPR screens"/>
</dbReference>
<dbReference type="ChiTaRS" id="Ddrgk1">
    <property type="organism name" value="mouse"/>
</dbReference>
<dbReference type="EvolutionaryTrace" id="Q80WW9"/>
<dbReference type="PRO" id="PR:Q80WW9"/>
<dbReference type="Proteomes" id="UP000000589">
    <property type="component" value="Chromosome 2"/>
</dbReference>
<dbReference type="RNAct" id="Q80WW9">
    <property type="molecule type" value="protein"/>
</dbReference>
<dbReference type="Bgee" id="ENSMUSG00000068290">
    <property type="expression patterns" value="Expressed in retinal neural layer and 245 other cell types or tissues"/>
</dbReference>
<dbReference type="ExpressionAtlas" id="Q80WW9">
    <property type="expression patterns" value="baseline and differential"/>
</dbReference>
<dbReference type="GO" id="GO:0005783">
    <property type="term" value="C:endoplasmic reticulum"/>
    <property type="evidence" value="ECO:0000314"/>
    <property type="project" value="UniProtKB"/>
</dbReference>
<dbReference type="GO" id="GO:0005789">
    <property type="term" value="C:endoplasmic reticulum membrane"/>
    <property type="evidence" value="ECO:0000250"/>
    <property type="project" value="UniProtKB"/>
</dbReference>
<dbReference type="GO" id="GO:0005730">
    <property type="term" value="C:nucleolus"/>
    <property type="evidence" value="ECO:0007669"/>
    <property type="project" value="Ensembl"/>
</dbReference>
<dbReference type="GO" id="GO:0044389">
    <property type="term" value="F:ubiquitin-like protein ligase binding"/>
    <property type="evidence" value="ECO:0000250"/>
    <property type="project" value="UniProtKB"/>
</dbReference>
<dbReference type="GO" id="GO:0141185">
    <property type="term" value="F:UFM1-modified protein reader activity"/>
    <property type="evidence" value="ECO:0000250"/>
    <property type="project" value="UniProtKB"/>
</dbReference>
<dbReference type="GO" id="GO:0051216">
    <property type="term" value="P:cartilage development"/>
    <property type="evidence" value="ECO:0000315"/>
    <property type="project" value="UniProtKB"/>
</dbReference>
<dbReference type="GO" id="GO:0043066">
    <property type="term" value="P:negative regulation of apoptotic process"/>
    <property type="evidence" value="ECO:0007669"/>
    <property type="project" value="Ensembl"/>
</dbReference>
<dbReference type="GO" id="GO:0010629">
    <property type="term" value="P:negative regulation of gene expression"/>
    <property type="evidence" value="ECO:0007669"/>
    <property type="project" value="Ensembl"/>
</dbReference>
<dbReference type="GO" id="GO:1903895">
    <property type="term" value="P:negative regulation of IRE1-mediated unfolded protein response"/>
    <property type="evidence" value="ECO:0000315"/>
    <property type="project" value="UniProtKB"/>
</dbReference>
<dbReference type="GO" id="GO:1903898">
    <property type="term" value="P:negative regulation of PERK-mediated unfolded protein response"/>
    <property type="evidence" value="ECO:0000315"/>
    <property type="project" value="UniProtKB"/>
</dbReference>
<dbReference type="GO" id="GO:0032435">
    <property type="term" value="P:negative regulation of proteasomal ubiquitin-dependent protein catabolic process"/>
    <property type="evidence" value="ECO:0000250"/>
    <property type="project" value="UniProtKB"/>
</dbReference>
<dbReference type="GO" id="GO:0043123">
    <property type="term" value="P:positive regulation of canonical NF-kappaB signal transduction"/>
    <property type="evidence" value="ECO:0007669"/>
    <property type="project" value="Ensembl"/>
</dbReference>
<dbReference type="GO" id="GO:0030335">
    <property type="term" value="P:positive regulation of cell migration"/>
    <property type="evidence" value="ECO:0007669"/>
    <property type="project" value="Ensembl"/>
</dbReference>
<dbReference type="GO" id="GO:0008284">
    <property type="term" value="P:positive regulation of cell population proliferation"/>
    <property type="evidence" value="ECO:0007669"/>
    <property type="project" value="Ensembl"/>
</dbReference>
<dbReference type="GO" id="GO:0010628">
    <property type="term" value="P:positive regulation of gene expression"/>
    <property type="evidence" value="ECO:0007669"/>
    <property type="project" value="Ensembl"/>
</dbReference>
<dbReference type="GO" id="GO:1903721">
    <property type="term" value="P:positive regulation of I-kappaB phosphorylation"/>
    <property type="evidence" value="ECO:0000250"/>
    <property type="project" value="UniProtKB"/>
</dbReference>
<dbReference type="GO" id="GO:0051092">
    <property type="term" value="P:positive regulation of NF-kappaB transcription factor activity"/>
    <property type="evidence" value="ECO:0000250"/>
    <property type="project" value="UniProtKB"/>
</dbReference>
<dbReference type="GO" id="GO:1900100">
    <property type="term" value="P:positive regulation of plasma cell differentiation"/>
    <property type="evidence" value="ECO:0000315"/>
    <property type="project" value="UniProtKB"/>
</dbReference>
<dbReference type="GO" id="GO:1901800">
    <property type="term" value="P:positive regulation of proteasomal protein catabolic process"/>
    <property type="evidence" value="ECO:0000250"/>
    <property type="project" value="UniProtKB"/>
</dbReference>
<dbReference type="GO" id="GO:0032436">
    <property type="term" value="P:positive regulation of proteasomal ubiquitin-dependent protein catabolic process"/>
    <property type="evidence" value="ECO:0007669"/>
    <property type="project" value="Ensembl"/>
</dbReference>
<dbReference type="GO" id="GO:1905552">
    <property type="term" value="P:positive regulation of protein localization to endoplasmic reticulum"/>
    <property type="evidence" value="ECO:0000314"/>
    <property type="project" value="ParkinsonsUK-UCL"/>
</dbReference>
<dbReference type="GO" id="GO:0140501">
    <property type="term" value="P:positive regulation of reticulophagy"/>
    <property type="evidence" value="ECO:0000250"/>
    <property type="project" value="UniProtKB"/>
</dbReference>
<dbReference type="GO" id="GO:0045944">
    <property type="term" value="P:positive regulation of transcription by RNA polymerase II"/>
    <property type="evidence" value="ECO:0007669"/>
    <property type="project" value="Ensembl"/>
</dbReference>
<dbReference type="GO" id="GO:1990592">
    <property type="term" value="P:protein K69-linked ufmylation"/>
    <property type="evidence" value="ECO:0000250"/>
    <property type="project" value="UniProtKB"/>
</dbReference>
<dbReference type="GO" id="GO:0070972">
    <property type="term" value="P:protein localization to endoplasmic reticulum"/>
    <property type="evidence" value="ECO:0000250"/>
    <property type="project" value="UniProtKB"/>
</dbReference>
<dbReference type="GO" id="GO:0071569">
    <property type="term" value="P:protein ufmylation"/>
    <property type="evidence" value="ECO:0000250"/>
    <property type="project" value="UniProtKB"/>
</dbReference>
<dbReference type="GO" id="GO:0033146">
    <property type="term" value="P:regulation of intracellular estrogen receptor signaling pathway"/>
    <property type="evidence" value="ECO:0000250"/>
    <property type="project" value="UniProtKB"/>
</dbReference>
<dbReference type="GO" id="GO:0031647">
    <property type="term" value="P:regulation of protein stability"/>
    <property type="evidence" value="ECO:0007669"/>
    <property type="project" value="Ensembl"/>
</dbReference>
<dbReference type="GO" id="GO:0072344">
    <property type="term" value="P:rescue of stalled ribosome"/>
    <property type="evidence" value="ECO:0000250"/>
    <property type="project" value="UniProtKB"/>
</dbReference>
<dbReference type="GO" id="GO:0034976">
    <property type="term" value="P:response to endoplasmic reticulum stress"/>
    <property type="evidence" value="ECO:0000315"/>
    <property type="project" value="UniProtKB"/>
</dbReference>
<dbReference type="GO" id="GO:0061709">
    <property type="term" value="P:reticulophagy"/>
    <property type="evidence" value="ECO:0000250"/>
    <property type="project" value="UniProtKB"/>
</dbReference>
<dbReference type="GO" id="GO:0032790">
    <property type="term" value="P:ribosome disassembly"/>
    <property type="evidence" value="ECO:0000250"/>
    <property type="project" value="UniProtKB"/>
</dbReference>
<dbReference type="FunFam" id="1.10.10.10:FF:000143">
    <property type="entry name" value="DDRGK domain-containing protein 1"/>
    <property type="match status" value="1"/>
</dbReference>
<dbReference type="Gene3D" id="1.10.10.10">
    <property type="entry name" value="Winged helix-like DNA-binding domain superfamily/Winged helix DNA-binding domain"/>
    <property type="match status" value="1"/>
</dbReference>
<dbReference type="InterPro" id="IPR019153">
    <property type="entry name" value="DDRGK_dom-contain"/>
</dbReference>
<dbReference type="InterPro" id="IPR050899">
    <property type="entry name" value="DDRGK_domain-containing"/>
</dbReference>
<dbReference type="InterPro" id="IPR036388">
    <property type="entry name" value="WH-like_DNA-bd_sf"/>
</dbReference>
<dbReference type="InterPro" id="IPR036390">
    <property type="entry name" value="WH_DNA-bd_sf"/>
</dbReference>
<dbReference type="PANTHER" id="PTHR48176">
    <property type="entry name" value="DDRGK DOMAIN-CONTAINING PROTEIN 1"/>
    <property type="match status" value="1"/>
</dbReference>
<dbReference type="PANTHER" id="PTHR48176:SF1">
    <property type="entry name" value="DDRGK DOMAIN-CONTAINING PROTEIN 1"/>
    <property type="match status" value="1"/>
</dbReference>
<dbReference type="Pfam" id="PF09756">
    <property type="entry name" value="DDRGK"/>
    <property type="match status" value="1"/>
</dbReference>
<dbReference type="SMART" id="SM01128">
    <property type="entry name" value="DDRGK"/>
    <property type="match status" value="1"/>
</dbReference>
<dbReference type="SUPFAM" id="SSF46785">
    <property type="entry name" value="Winged helix' DNA-binding domain"/>
    <property type="match status" value="1"/>
</dbReference>
<name>DDRGK_MOUSE</name>
<keyword id="KW-0002">3D-structure</keyword>
<keyword id="KW-0256">Endoplasmic reticulum</keyword>
<keyword id="KW-1017">Isopeptide bond</keyword>
<keyword id="KW-0472">Membrane</keyword>
<keyword id="KW-0597">Phosphoprotein</keyword>
<keyword id="KW-1185">Reference proteome</keyword>
<keyword id="KW-0812">Transmembrane</keyword>
<keyword id="KW-1133">Transmembrane helix</keyword>
<keyword id="KW-0832">Ubl conjugation</keyword>
<keyword id="KW-0833">Ubl conjugation pathway</keyword>
<feature type="chain" id="PRO_0000021034" description="DDRGK domain-containing protein 1">
    <location>
        <begin position="1"/>
        <end position="315"/>
    </location>
</feature>
<feature type="transmembrane region" description="Helical" evidence="1">
    <location>
        <begin position="1"/>
        <end position="28"/>
    </location>
</feature>
<feature type="topological domain" description="Cytoplasmic" evidence="14">
    <location>
        <begin position="29"/>
        <end position="315"/>
    </location>
</feature>
<feature type="domain" description="PCI">
    <location>
        <begin position="230"/>
        <end position="274"/>
    </location>
</feature>
<feature type="region of interest" description="Mediates interaction with CDK5RAP3" evidence="1">
    <location>
        <begin position="1"/>
        <end position="115"/>
    </location>
</feature>
<feature type="region of interest" description="Disordered" evidence="2">
    <location>
        <begin position="30"/>
        <end position="184"/>
    </location>
</feature>
<feature type="region of interest" description="Mediates interaction with TRIP4" evidence="1">
    <location>
        <begin position="119"/>
        <end position="217"/>
    </location>
</feature>
<feature type="region of interest" description="Mediates interaction with UFL1" evidence="1">
    <location>
        <begin position="217"/>
        <end position="315"/>
    </location>
</feature>
<feature type="short sequence motif" description="UFM1-interacting motif (UFIM)" evidence="1">
    <location>
        <begin position="196"/>
        <end position="210"/>
    </location>
</feature>
<feature type="compositionally biased region" description="Basic and acidic residues" evidence="2">
    <location>
        <begin position="34"/>
        <end position="43"/>
    </location>
</feature>
<feature type="compositionally biased region" description="Basic and acidic residues" evidence="2">
    <location>
        <begin position="125"/>
        <end position="184"/>
    </location>
</feature>
<feature type="modified residue" description="Phosphoserine" evidence="1">
    <location>
        <position position="73"/>
    </location>
</feature>
<feature type="cross-link" description="Glycyl lysine isopeptide (Lys-Gly) (interchain with G-Cter in UFM1)" evidence="1">
    <location>
        <position position="268"/>
    </location>
</feature>
<feature type="helix" evidence="16">
    <location>
        <begin position="216"/>
        <end position="226"/>
    </location>
</feature>
<feature type="strand" evidence="16">
    <location>
        <begin position="228"/>
        <end position="230"/>
    </location>
</feature>
<feature type="helix" evidence="16">
    <location>
        <begin position="232"/>
        <end position="239"/>
    </location>
</feature>
<feature type="helix" evidence="16">
    <location>
        <begin position="243"/>
        <end position="256"/>
    </location>
</feature>
<feature type="strand" evidence="16">
    <location>
        <begin position="257"/>
        <end position="259"/>
    </location>
</feature>
<feature type="strand" evidence="16">
    <location>
        <begin position="261"/>
        <end position="263"/>
    </location>
</feature>
<feature type="strand" evidence="16">
    <location>
        <begin position="269"/>
        <end position="271"/>
    </location>
</feature>
<accession>Q80WW9</accession>
<accession>Q14BT4</accession>
<accession>Q9CT52</accession>
<organism>
    <name type="scientific">Mus musculus</name>
    <name type="common">Mouse</name>
    <dbReference type="NCBI Taxonomy" id="10090"/>
    <lineage>
        <taxon>Eukaryota</taxon>
        <taxon>Metazoa</taxon>
        <taxon>Chordata</taxon>
        <taxon>Craniata</taxon>
        <taxon>Vertebrata</taxon>
        <taxon>Euteleostomi</taxon>
        <taxon>Mammalia</taxon>
        <taxon>Eutheria</taxon>
        <taxon>Euarchontoglires</taxon>
        <taxon>Glires</taxon>
        <taxon>Rodentia</taxon>
        <taxon>Myomorpha</taxon>
        <taxon>Muroidea</taxon>
        <taxon>Muridae</taxon>
        <taxon>Murinae</taxon>
        <taxon>Mus</taxon>
        <taxon>Mus</taxon>
    </lineage>
</organism>